<protein>
    <recommendedName>
        <fullName evidence="1">Large ribosomal subunit protein uL1</fullName>
    </recommendedName>
    <alternativeName>
        <fullName evidence="2">50S ribosomal protein L1</fullName>
    </alternativeName>
</protein>
<comment type="function">
    <text evidence="1">Binds directly to 23S rRNA. The L1 stalk is quite mobile in the ribosome, and is involved in E site tRNA release.</text>
</comment>
<comment type="function">
    <text evidence="1">Protein L1 is also a translational repressor protein, it controls the translation of the L11 operon by binding to its mRNA.</text>
</comment>
<comment type="subunit">
    <text evidence="1">Part of the 50S ribosomal subunit.</text>
</comment>
<comment type="similarity">
    <text evidence="1">Belongs to the universal ribosomal protein uL1 family.</text>
</comment>
<feature type="chain" id="PRO_0000125705" description="Large ribosomal subunit protein uL1">
    <location>
        <begin position="1"/>
        <end position="229"/>
    </location>
</feature>
<proteinExistence type="inferred from homology"/>
<evidence type="ECO:0000255" key="1">
    <source>
        <dbReference type="HAMAP-Rule" id="MF_01318"/>
    </source>
</evidence>
<evidence type="ECO:0000305" key="2"/>
<name>RL1_PASMU</name>
<reference key="1">
    <citation type="journal article" date="2001" name="Proc. Natl. Acad. Sci. U.S.A.">
        <title>Complete genomic sequence of Pasteurella multocida Pm70.</title>
        <authorList>
            <person name="May B.J."/>
            <person name="Zhang Q."/>
            <person name="Li L.L."/>
            <person name="Paustian M.L."/>
            <person name="Whittam T.S."/>
            <person name="Kapur V."/>
        </authorList>
    </citation>
    <scope>NUCLEOTIDE SEQUENCE [LARGE SCALE GENOMIC DNA]</scope>
    <source>
        <strain>Pm70</strain>
    </source>
</reference>
<dbReference type="EMBL" id="AE004439">
    <property type="protein sequence ID" value="AAK03826.1"/>
    <property type="molecule type" value="Genomic_DNA"/>
</dbReference>
<dbReference type="RefSeq" id="WP_005718821.1">
    <property type="nucleotide sequence ID" value="NC_002663.1"/>
</dbReference>
<dbReference type="SMR" id="Q9CK86"/>
<dbReference type="STRING" id="272843.PM1742"/>
<dbReference type="EnsemblBacteria" id="AAK03826">
    <property type="protein sequence ID" value="AAK03826"/>
    <property type="gene ID" value="PM1742"/>
</dbReference>
<dbReference type="GeneID" id="77206672"/>
<dbReference type="KEGG" id="pmu:PM1742"/>
<dbReference type="HOGENOM" id="CLU_062853_0_0_6"/>
<dbReference type="OrthoDB" id="9803740at2"/>
<dbReference type="Proteomes" id="UP000000809">
    <property type="component" value="Chromosome"/>
</dbReference>
<dbReference type="GO" id="GO:0022625">
    <property type="term" value="C:cytosolic large ribosomal subunit"/>
    <property type="evidence" value="ECO:0007669"/>
    <property type="project" value="TreeGrafter"/>
</dbReference>
<dbReference type="GO" id="GO:0019843">
    <property type="term" value="F:rRNA binding"/>
    <property type="evidence" value="ECO:0007669"/>
    <property type="project" value="UniProtKB-UniRule"/>
</dbReference>
<dbReference type="GO" id="GO:0003735">
    <property type="term" value="F:structural constituent of ribosome"/>
    <property type="evidence" value="ECO:0007669"/>
    <property type="project" value="InterPro"/>
</dbReference>
<dbReference type="GO" id="GO:0000049">
    <property type="term" value="F:tRNA binding"/>
    <property type="evidence" value="ECO:0007669"/>
    <property type="project" value="UniProtKB-KW"/>
</dbReference>
<dbReference type="GO" id="GO:0006417">
    <property type="term" value="P:regulation of translation"/>
    <property type="evidence" value="ECO:0007669"/>
    <property type="project" value="UniProtKB-KW"/>
</dbReference>
<dbReference type="GO" id="GO:0006412">
    <property type="term" value="P:translation"/>
    <property type="evidence" value="ECO:0007669"/>
    <property type="project" value="UniProtKB-UniRule"/>
</dbReference>
<dbReference type="CDD" id="cd00403">
    <property type="entry name" value="Ribosomal_L1"/>
    <property type="match status" value="1"/>
</dbReference>
<dbReference type="FunFam" id="3.40.50.790:FF:000001">
    <property type="entry name" value="50S ribosomal protein L1"/>
    <property type="match status" value="1"/>
</dbReference>
<dbReference type="Gene3D" id="3.30.190.20">
    <property type="match status" value="1"/>
</dbReference>
<dbReference type="Gene3D" id="3.40.50.790">
    <property type="match status" value="1"/>
</dbReference>
<dbReference type="HAMAP" id="MF_01318_B">
    <property type="entry name" value="Ribosomal_uL1_B"/>
    <property type="match status" value="1"/>
</dbReference>
<dbReference type="InterPro" id="IPR005878">
    <property type="entry name" value="Ribosom_uL1_bac-type"/>
</dbReference>
<dbReference type="InterPro" id="IPR002143">
    <property type="entry name" value="Ribosomal_uL1"/>
</dbReference>
<dbReference type="InterPro" id="IPR023674">
    <property type="entry name" value="Ribosomal_uL1-like"/>
</dbReference>
<dbReference type="InterPro" id="IPR028364">
    <property type="entry name" value="Ribosomal_uL1/biogenesis"/>
</dbReference>
<dbReference type="InterPro" id="IPR016095">
    <property type="entry name" value="Ribosomal_uL1_3-a/b-sand"/>
</dbReference>
<dbReference type="InterPro" id="IPR023673">
    <property type="entry name" value="Ribosomal_uL1_CS"/>
</dbReference>
<dbReference type="NCBIfam" id="TIGR01169">
    <property type="entry name" value="rplA_bact"/>
    <property type="match status" value="1"/>
</dbReference>
<dbReference type="PANTHER" id="PTHR36427">
    <property type="entry name" value="54S RIBOSOMAL PROTEIN L1, MITOCHONDRIAL"/>
    <property type="match status" value="1"/>
</dbReference>
<dbReference type="PANTHER" id="PTHR36427:SF3">
    <property type="entry name" value="LARGE RIBOSOMAL SUBUNIT PROTEIN UL1M"/>
    <property type="match status" value="1"/>
</dbReference>
<dbReference type="Pfam" id="PF00687">
    <property type="entry name" value="Ribosomal_L1"/>
    <property type="match status" value="1"/>
</dbReference>
<dbReference type="PIRSF" id="PIRSF002155">
    <property type="entry name" value="Ribosomal_L1"/>
    <property type="match status" value="1"/>
</dbReference>
<dbReference type="SUPFAM" id="SSF56808">
    <property type="entry name" value="Ribosomal protein L1"/>
    <property type="match status" value="1"/>
</dbReference>
<dbReference type="PROSITE" id="PS01199">
    <property type="entry name" value="RIBOSOMAL_L1"/>
    <property type="match status" value="1"/>
</dbReference>
<sequence length="229" mass="24097">MAKLTKKMKSIKAAVDSTKAYEINEAIAVLKQFATAKFVESVDVAVNLGIDPRKSDQNVRGATVLPHGTGRSVRVAVFTQGANAEAAKEAGADLVGMEDLAELVKKGEMNFDVVIASPDAMRVVGQLGQILGPRGLMPNPKVGTVTPNVADAVKNAKSGQVRYRNDKNGIIHTTIGKVNFSEEQLKENLQALLAALAKAKPTTSKGVFIKKVSLSTTMGAGVAIDQASL</sequence>
<keyword id="KW-1185">Reference proteome</keyword>
<keyword id="KW-0678">Repressor</keyword>
<keyword id="KW-0687">Ribonucleoprotein</keyword>
<keyword id="KW-0689">Ribosomal protein</keyword>
<keyword id="KW-0694">RNA-binding</keyword>
<keyword id="KW-0699">rRNA-binding</keyword>
<keyword id="KW-0810">Translation regulation</keyword>
<keyword id="KW-0820">tRNA-binding</keyword>
<accession>Q9CK86</accession>
<gene>
    <name evidence="1" type="primary">rplA</name>
    <name evidence="1" type="synonym">rpl1</name>
    <name type="ordered locus">PM1742</name>
</gene>
<organism>
    <name type="scientific">Pasteurella multocida (strain Pm70)</name>
    <dbReference type="NCBI Taxonomy" id="272843"/>
    <lineage>
        <taxon>Bacteria</taxon>
        <taxon>Pseudomonadati</taxon>
        <taxon>Pseudomonadota</taxon>
        <taxon>Gammaproteobacteria</taxon>
        <taxon>Pasteurellales</taxon>
        <taxon>Pasteurellaceae</taxon>
        <taxon>Pasteurella</taxon>
    </lineage>
</organism>